<evidence type="ECO:0000250" key="1"/>
<evidence type="ECO:0000255" key="2"/>
<evidence type="ECO:0000255" key="3">
    <source>
        <dbReference type="PROSITE-ProRule" id="PRU01258"/>
    </source>
</evidence>
<evidence type="ECO:0000305" key="4"/>
<gene>
    <name type="primary">chi3</name>
    <name type="ORF">MAA_01212</name>
</gene>
<protein>
    <recommendedName>
        <fullName>Endochitinase 3</fullName>
        <ecNumber>3.2.1.14</ecNumber>
    </recommendedName>
    <alternativeName>
        <fullName>Chitinase 3</fullName>
    </alternativeName>
</protein>
<accession>E9ENC6</accession>
<name>CHI3_METRA</name>
<dbReference type="EC" id="3.2.1.14"/>
<dbReference type="EMBL" id="ADNJ02000008">
    <property type="protein sequence ID" value="EFZ04138.2"/>
    <property type="status" value="ALT_INIT"/>
    <property type="molecule type" value="Genomic_DNA"/>
</dbReference>
<dbReference type="RefSeq" id="XP_007817401.2">
    <property type="nucleotide sequence ID" value="XM_007819210.2"/>
</dbReference>
<dbReference type="SMR" id="E9ENC6"/>
<dbReference type="CAZy" id="GH18">
    <property type="family name" value="Glycoside Hydrolase Family 18"/>
</dbReference>
<dbReference type="GlyCosmos" id="E9ENC6">
    <property type="glycosylation" value="4 sites, No reported glycans"/>
</dbReference>
<dbReference type="GeneID" id="19255498"/>
<dbReference type="KEGG" id="maj:MAA_01212"/>
<dbReference type="HOGENOM" id="CLU_007818_2_1_1"/>
<dbReference type="OrthoDB" id="2425929at2759"/>
<dbReference type="Proteomes" id="UP000002498">
    <property type="component" value="Unassembled WGS sequence"/>
</dbReference>
<dbReference type="GO" id="GO:0005576">
    <property type="term" value="C:extracellular region"/>
    <property type="evidence" value="ECO:0007669"/>
    <property type="project" value="UniProtKB-SubCell"/>
</dbReference>
<dbReference type="GO" id="GO:0008061">
    <property type="term" value="F:chitin binding"/>
    <property type="evidence" value="ECO:0007669"/>
    <property type="project" value="UniProtKB-KW"/>
</dbReference>
<dbReference type="GO" id="GO:0008843">
    <property type="term" value="F:endochitinase activity"/>
    <property type="evidence" value="ECO:0007669"/>
    <property type="project" value="UniProtKB-EC"/>
</dbReference>
<dbReference type="GO" id="GO:0006032">
    <property type="term" value="P:chitin catabolic process"/>
    <property type="evidence" value="ECO:0007669"/>
    <property type="project" value="UniProtKB-KW"/>
</dbReference>
<dbReference type="GO" id="GO:0000272">
    <property type="term" value="P:polysaccharide catabolic process"/>
    <property type="evidence" value="ECO:0007669"/>
    <property type="project" value="UniProtKB-KW"/>
</dbReference>
<dbReference type="CDD" id="cd02877">
    <property type="entry name" value="GH18_hevamine_XipI_class_III"/>
    <property type="match status" value="1"/>
</dbReference>
<dbReference type="Gene3D" id="3.20.20.80">
    <property type="entry name" value="Glycosidases"/>
    <property type="match status" value="1"/>
</dbReference>
<dbReference type="InterPro" id="IPR045321">
    <property type="entry name" value="Cts1-like"/>
</dbReference>
<dbReference type="InterPro" id="IPR001223">
    <property type="entry name" value="Glyco_hydro18_cat"/>
</dbReference>
<dbReference type="InterPro" id="IPR001579">
    <property type="entry name" value="Glyco_hydro_18_chit_AS"/>
</dbReference>
<dbReference type="InterPro" id="IPR017853">
    <property type="entry name" value="Glycoside_hydrolase_SF"/>
</dbReference>
<dbReference type="InterPro" id="IPR050542">
    <property type="entry name" value="Glycosyl_Hydrlase18_Chitinase"/>
</dbReference>
<dbReference type="PANTHER" id="PTHR45708">
    <property type="entry name" value="ENDOCHITINASE"/>
    <property type="match status" value="1"/>
</dbReference>
<dbReference type="PANTHER" id="PTHR45708:SF49">
    <property type="entry name" value="ENDOCHITINASE"/>
    <property type="match status" value="1"/>
</dbReference>
<dbReference type="Pfam" id="PF00704">
    <property type="entry name" value="Glyco_hydro_18"/>
    <property type="match status" value="1"/>
</dbReference>
<dbReference type="SUPFAM" id="SSF51445">
    <property type="entry name" value="(Trans)glycosidases"/>
    <property type="match status" value="1"/>
</dbReference>
<dbReference type="PROSITE" id="PS01095">
    <property type="entry name" value="GH18_1"/>
    <property type="match status" value="1"/>
</dbReference>
<dbReference type="PROSITE" id="PS51910">
    <property type="entry name" value="GH18_2"/>
    <property type="match status" value="1"/>
</dbReference>
<sequence length="317" mass="34157">MFVRNALVVTGLLAALTQAAPAERNTSRHKLTVYWGAEDDTTTLDDVCNDSSYDVVNLAFLSHFFSGGGYPRMSIGNLDGPSRAQKKAGATGLQDGSSLVKSIKNCQSKGKPVILSMGGATDYSDVQLHSDAQGQQIANTVWDLFLGGTDHKELRPFGDVKLDGVDLDNETNDGTGYLAMAKQFKANFQKDTSKKYYITAAPQCPYPDQSEPLDVCRLLDWVQVQFYNNGNCNIAQSGFATAVKNWSRGIGSGVQLYIGALASGADGDEGYVDAAVLNRAIDQVKAMDLPNFGGAMLWEAQLAVNNGNYQKEIKANL</sequence>
<comment type="function">
    <text evidence="1">Secreted chitinase involved in the degradation of chitin, a component of the cell walls of fungi and exoskeletal elements of some animals (including worms and arthropods). Participates in the infection process and directly acts in the penetration process of the host cuticle. Involved in heat-shock adaptation (By similarity).</text>
</comment>
<comment type="catalytic activity">
    <reaction>
        <text>Random endo-hydrolysis of N-acetyl-beta-D-glucosaminide (1-&gt;4)-beta-linkages in chitin and chitodextrins.</text>
        <dbReference type="EC" id="3.2.1.14"/>
    </reaction>
</comment>
<comment type="subcellular location">
    <subcellularLocation>
        <location evidence="1">Secreted</location>
    </subcellularLocation>
</comment>
<comment type="similarity">
    <text evidence="4">Belongs to the glycosyl hydrolase 18 family. Chitinase class III subfamily.</text>
</comment>
<comment type="sequence caution" evidence="4">
    <conflict type="erroneous initiation">
        <sequence resource="EMBL-CDS" id="EFZ04138"/>
    </conflict>
    <text>Extended N-terminus.</text>
</comment>
<proteinExistence type="inferred from homology"/>
<reference key="1">
    <citation type="journal article" date="2011" name="PLoS Genet.">
        <title>Genome sequencing and comparative transcriptomics of the model entomopathogenic fungi Metarhizium anisopliae and M. acridum.</title>
        <authorList>
            <person name="Gao Q."/>
            <person name="Jin K."/>
            <person name="Ying S.-H."/>
            <person name="Zhang Y."/>
            <person name="Xiao G."/>
            <person name="Shang Y."/>
            <person name="Duan Z."/>
            <person name="Hu X."/>
            <person name="Xie X.-Q."/>
            <person name="Zhou G."/>
            <person name="Peng G."/>
            <person name="Luo Z."/>
            <person name="Huang W."/>
            <person name="Wang B."/>
            <person name="Fang W."/>
            <person name="Wang S."/>
            <person name="Zhong Y."/>
            <person name="Ma L.-J."/>
            <person name="St Leger R.J."/>
            <person name="Zhao G.-P."/>
            <person name="Pei Y."/>
            <person name="Feng M.-G."/>
            <person name="Xia Y."/>
            <person name="Wang C."/>
        </authorList>
    </citation>
    <scope>NUCLEOTIDE SEQUENCE [LARGE SCALE GENOMIC DNA]</scope>
    <source>
        <strain>ARSEF 23 / ATCC MYA-3075</strain>
    </source>
</reference>
<reference key="2">
    <citation type="journal article" date="2014" name="Proc. Natl. Acad. Sci. U.S.A.">
        <title>Trajectory and genomic determinants of fungal-pathogen speciation and host adaptation.</title>
        <authorList>
            <person name="Hu X."/>
            <person name="Xiao G."/>
            <person name="Zheng P."/>
            <person name="Shang Y."/>
            <person name="Su Y."/>
            <person name="Zhang X."/>
            <person name="Liu X."/>
            <person name="Zhan S."/>
            <person name="St Leger R.J."/>
            <person name="Wang C."/>
        </authorList>
    </citation>
    <scope>GENOME REANNOTATION</scope>
    <source>
        <strain>ARSEF 23 / ATCC MYA-3075</strain>
    </source>
</reference>
<keyword id="KW-0119">Carbohydrate metabolism</keyword>
<keyword id="KW-0146">Chitin degradation</keyword>
<keyword id="KW-0147">Chitin-binding</keyword>
<keyword id="KW-0325">Glycoprotein</keyword>
<keyword id="KW-0326">Glycosidase</keyword>
<keyword id="KW-0378">Hydrolase</keyword>
<keyword id="KW-0624">Polysaccharide degradation</keyword>
<keyword id="KW-0964">Secreted</keyword>
<keyword id="KW-0732">Signal</keyword>
<keyword id="KW-0843">Virulence</keyword>
<organism>
    <name type="scientific">Metarhizium robertsii (strain ARSEF 23 / ATCC MYA-3075)</name>
    <name type="common">Metarhizium anisopliae (strain ARSEF 23)</name>
    <dbReference type="NCBI Taxonomy" id="655844"/>
    <lineage>
        <taxon>Eukaryota</taxon>
        <taxon>Fungi</taxon>
        <taxon>Dikarya</taxon>
        <taxon>Ascomycota</taxon>
        <taxon>Pezizomycotina</taxon>
        <taxon>Sordariomycetes</taxon>
        <taxon>Hypocreomycetidae</taxon>
        <taxon>Hypocreales</taxon>
        <taxon>Clavicipitaceae</taxon>
        <taxon>Metarhizium</taxon>
    </lineage>
</organism>
<feature type="signal peptide" evidence="2">
    <location>
        <begin position="1"/>
        <end position="19"/>
    </location>
</feature>
<feature type="chain" id="PRO_0000429869" description="Endochitinase 3">
    <location>
        <begin position="20"/>
        <end position="317"/>
    </location>
</feature>
<feature type="domain" description="GH18" evidence="3">
    <location>
        <begin position="29"/>
        <end position="317"/>
    </location>
</feature>
<feature type="active site" description="Proton donor" evidence="3">
    <location>
        <position position="170"/>
    </location>
</feature>
<feature type="glycosylation site" description="N-linked (GlcNAc...) asparagine" evidence="2">
    <location>
        <position position="25"/>
    </location>
</feature>
<feature type="glycosylation site" description="N-linked (GlcNAc...) asparagine" evidence="2">
    <location>
        <position position="49"/>
    </location>
</feature>
<feature type="glycosylation site" description="N-linked (GlcNAc...) asparagine" evidence="2">
    <location>
        <position position="169"/>
    </location>
</feature>
<feature type="glycosylation site" description="N-linked (GlcNAc...) asparagine" evidence="2">
    <location>
        <position position="245"/>
    </location>
</feature>